<dbReference type="EC" id="2.5.1.145" evidence="1"/>
<dbReference type="EMBL" id="CP000076">
    <property type="protein sequence ID" value="AAY95086.1"/>
    <property type="molecule type" value="Genomic_DNA"/>
</dbReference>
<dbReference type="RefSeq" id="WP_011064069.1">
    <property type="nucleotide sequence ID" value="NC_004129.6"/>
</dbReference>
<dbReference type="SMR" id="Q4K479"/>
<dbReference type="STRING" id="220664.PFL_5896"/>
<dbReference type="GeneID" id="57478851"/>
<dbReference type="KEGG" id="pfl:PFL_5896"/>
<dbReference type="PATRIC" id="fig|220664.5.peg.6012"/>
<dbReference type="eggNOG" id="COG0682">
    <property type="taxonomic scope" value="Bacteria"/>
</dbReference>
<dbReference type="HOGENOM" id="CLU_013386_1_0_6"/>
<dbReference type="UniPathway" id="UPA00664"/>
<dbReference type="Proteomes" id="UP000008540">
    <property type="component" value="Chromosome"/>
</dbReference>
<dbReference type="GO" id="GO:0005886">
    <property type="term" value="C:plasma membrane"/>
    <property type="evidence" value="ECO:0007669"/>
    <property type="project" value="UniProtKB-SubCell"/>
</dbReference>
<dbReference type="GO" id="GO:0008961">
    <property type="term" value="F:phosphatidylglycerol-prolipoprotein diacylglyceryl transferase activity"/>
    <property type="evidence" value="ECO:0007669"/>
    <property type="project" value="UniProtKB-UniRule"/>
</dbReference>
<dbReference type="GO" id="GO:0042158">
    <property type="term" value="P:lipoprotein biosynthetic process"/>
    <property type="evidence" value="ECO:0007669"/>
    <property type="project" value="UniProtKB-UniRule"/>
</dbReference>
<dbReference type="HAMAP" id="MF_01147">
    <property type="entry name" value="Lgt"/>
    <property type="match status" value="1"/>
</dbReference>
<dbReference type="InterPro" id="IPR001640">
    <property type="entry name" value="Lgt"/>
</dbReference>
<dbReference type="NCBIfam" id="TIGR00544">
    <property type="entry name" value="lgt"/>
    <property type="match status" value="1"/>
</dbReference>
<dbReference type="PANTHER" id="PTHR30589:SF0">
    <property type="entry name" value="PHOSPHATIDYLGLYCEROL--PROLIPOPROTEIN DIACYLGLYCERYL TRANSFERASE"/>
    <property type="match status" value="1"/>
</dbReference>
<dbReference type="PANTHER" id="PTHR30589">
    <property type="entry name" value="PROLIPOPROTEIN DIACYLGLYCERYL TRANSFERASE"/>
    <property type="match status" value="1"/>
</dbReference>
<dbReference type="Pfam" id="PF01790">
    <property type="entry name" value="LGT"/>
    <property type="match status" value="1"/>
</dbReference>
<dbReference type="PROSITE" id="PS01311">
    <property type="entry name" value="LGT"/>
    <property type="match status" value="1"/>
</dbReference>
<sequence length="269" mass="30335">MLPYPQIDPVALAIGPLKIHWYGLMYLIGIGGAWLLASRRLNRFDPTWSKEKLSDMVFWMSMGVIVGGRLGYVLFYDLSAYLANPTLIFEVWKGGMSFHGGFIGVMLAAWWFGKRNNKTFFELMDFVAPMVPIGLGAGRIGNFINAELWGKPTDLPWAMVFPPFSDPAQLPRHPSQLYQFALEGVALFLILWLFSRKPRPTMAVSGMFALFYGIFRFIVEFVRVPDAQLGYLAWNWLTMGQVLCVPMILGGLGLIWLAYHRAPAKSAAQ</sequence>
<evidence type="ECO:0000255" key="1">
    <source>
        <dbReference type="HAMAP-Rule" id="MF_01147"/>
    </source>
</evidence>
<reference key="1">
    <citation type="journal article" date="2005" name="Nat. Biotechnol.">
        <title>Complete genome sequence of the plant commensal Pseudomonas fluorescens Pf-5.</title>
        <authorList>
            <person name="Paulsen I.T."/>
            <person name="Press C.M."/>
            <person name="Ravel J."/>
            <person name="Kobayashi D.Y."/>
            <person name="Myers G.S.A."/>
            <person name="Mavrodi D.V."/>
            <person name="DeBoy R.T."/>
            <person name="Seshadri R."/>
            <person name="Ren Q."/>
            <person name="Madupu R."/>
            <person name="Dodson R.J."/>
            <person name="Durkin A.S."/>
            <person name="Brinkac L.M."/>
            <person name="Daugherty S.C."/>
            <person name="Sullivan S.A."/>
            <person name="Rosovitz M.J."/>
            <person name="Gwinn M.L."/>
            <person name="Zhou L."/>
            <person name="Schneider D.J."/>
            <person name="Cartinhour S.W."/>
            <person name="Nelson W.C."/>
            <person name="Weidman J."/>
            <person name="Watkins K."/>
            <person name="Tran K."/>
            <person name="Khouri H."/>
            <person name="Pierson E.A."/>
            <person name="Pierson L.S. III"/>
            <person name="Thomashow L.S."/>
            <person name="Loper J.E."/>
        </authorList>
    </citation>
    <scope>NUCLEOTIDE SEQUENCE [LARGE SCALE GENOMIC DNA]</scope>
    <source>
        <strain>ATCC BAA-477 / NRRL B-23932 / Pf-5</strain>
    </source>
</reference>
<gene>
    <name evidence="1" type="primary">lgt</name>
    <name type="ordered locus">PFL_5896</name>
</gene>
<name>LGT_PSEF5</name>
<proteinExistence type="inferred from homology"/>
<feature type="chain" id="PRO_1000053477" description="Phosphatidylglycerol--prolipoprotein diacylglyceryl transferase">
    <location>
        <begin position="1"/>
        <end position="269"/>
    </location>
</feature>
<feature type="transmembrane region" description="Helical" evidence="1">
    <location>
        <begin position="10"/>
        <end position="30"/>
    </location>
</feature>
<feature type="transmembrane region" description="Helical" evidence="1">
    <location>
        <begin position="56"/>
        <end position="76"/>
    </location>
</feature>
<feature type="transmembrane region" description="Helical" evidence="1">
    <location>
        <begin position="92"/>
        <end position="112"/>
    </location>
</feature>
<feature type="transmembrane region" description="Helical" evidence="1">
    <location>
        <begin position="120"/>
        <end position="140"/>
    </location>
</feature>
<feature type="transmembrane region" description="Helical" evidence="1">
    <location>
        <begin position="174"/>
        <end position="194"/>
    </location>
</feature>
<feature type="transmembrane region" description="Helical" evidence="1">
    <location>
        <begin position="202"/>
        <end position="222"/>
    </location>
</feature>
<feature type="transmembrane region" description="Helical" evidence="1">
    <location>
        <begin position="237"/>
        <end position="257"/>
    </location>
</feature>
<feature type="binding site" evidence="1">
    <location>
        <position position="139"/>
    </location>
    <ligand>
        <name>a 1,2-diacyl-sn-glycero-3-phospho-(1'-sn-glycerol)</name>
        <dbReference type="ChEBI" id="CHEBI:64716"/>
    </ligand>
</feature>
<organism>
    <name type="scientific">Pseudomonas fluorescens (strain ATCC BAA-477 / NRRL B-23932 / Pf-5)</name>
    <dbReference type="NCBI Taxonomy" id="220664"/>
    <lineage>
        <taxon>Bacteria</taxon>
        <taxon>Pseudomonadati</taxon>
        <taxon>Pseudomonadota</taxon>
        <taxon>Gammaproteobacteria</taxon>
        <taxon>Pseudomonadales</taxon>
        <taxon>Pseudomonadaceae</taxon>
        <taxon>Pseudomonas</taxon>
    </lineage>
</organism>
<comment type="function">
    <text evidence="1">Catalyzes the transfer of the diacylglyceryl group from phosphatidylglycerol to the sulfhydryl group of the N-terminal cysteine of a prolipoprotein, the first step in the formation of mature lipoproteins.</text>
</comment>
<comment type="catalytic activity">
    <reaction evidence="1">
        <text>L-cysteinyl-[prolipoprotein] + a 1,2-diacyl-sn-glycero-3-phospho-(1'-sn-glycerol) = an S-1,2-diacyl-sn-glyceryl-L-cysteinyl-[prolipoprotein] + sn-glycerol 1-phosphate + H(+)</text>
        <dbReference type="Rhea" id="RHEA:56712"/>
        <dbReference type="Rhea" id="RHEA-COMP:14679"/>
        <dbReference type="Rhea" id="RHEA-COMP:14680"/>
        <dbReference type="ChEBI" id="CHEBI:15378"/>
        <dbReference type="ChEBI" id="CHEBI:29950"/>
        <dbReference type="ChEBI" id="CHEBI:57685"/>
        <dbReference type="ChEBI" id="CHEBI:64716"/>
        <dbReference type="ChEBI" id="CHEBI:140658"/>
        <dbReference type="EC" id="2.5.1.145"/>
    </reaction>
</comment>
<comment type="pathway">
    <text evidence="1">Protein modification; lipoprotein biosynthesis (diacylglyceryl transfer).</text>
</comment>
<comment type="subcellular location">
    <subcellularLocation>
        <location evidence="1">Cell inner membrane</location>
        <topology evidence="1">Multi-pass membrane protein</topology>
    </subcellularLocation>
</comment>
<comment type="similarity">
    <text evidence="1">Belongs to the Lgt family.</text>
</comment>
<keyword id="KW-0997">Cell inner membrane</keyword>
<keyword id="KW-1003">Cell membrane</keyword>
<keyword id="KW-0472">Membrane</keyword>
<keyword id="KW-0808">Transferase</keyword>
<keyword id="KW-0812">Transmembrane</keyword>
<keyword id="KW-1133">Transmembrane helix</keyword>
<accession>Q4K479</accession>
<protein>
    <recommendedName>
        <fullName evidence="1">Phosphatidylglycerol--prolipoprotein diacylglyceryl transferase</fullName>
        <ecNumber evidence="1">2.5.1.145</ecNumber>
    </recommendedName>
</protein>